<keyword id="KW-0963">Cytoplasm</keyword>
<keyword id="KW-0441">Lipid A biosynthesis</keyword>
<keyword id="KW-0444">Lipid biosynthesis</keyword>
<keyword id="KW-0443">Lipid metabolism</keyword>
<keyword id="KW-0456">Lyase</keyword>
<keyword id="KW-1185">Reference proteome</keyword>
<sequence length="153" mass="17140">MPTLTDSPPTTVLTVTELQQLLPHRYPFLLVDRIIDYVPEKYAVGLKNVTINEPFFQGHFPGRPIMPGVLIVEALAQVGGVVLMQMNWAKDKLSVFAGIDKVRFRRPVVPGDQLILRAELLVVKQQRIGKMQGRAEVNGQLVCEGEMMFSLVD</sequence>
<dbReference type="EC" id="4.2.1.59" evidence="1"/>
<dbReference type="EMBL" id="BA000039">
    <property type="protein sequence ID" value="BAC09343.1"/>
    <property type="molecule type" value="Genomic_DNA"/>
</dbReference>
<dbReference type="RefSeq" id="NP_682581.1">
    <property type="nucleotide sequence ID" value="NC_004113.1"/>
</dbReference>
<dbReference type="RefSeq" id="WP_011057628.1">
    <property type="nucleotide sequence ID" value="NC_004113.1"/>
</dbReference>
<dbReference type="SMR" id="Q8DI01"/>
<dbReference type="STRING" id="197221.gene:10748396"/>
<dbReference type="EnsemblBacteria" id="BAC09343">
    <property type="protein sequence ID" value="BAC09343"/>
    <property type="gene ID" value="BAC09343"/>
</dbReference>
<dbReference type="KEGG" id="tel:tlr1791"/>
<dbReference type="PATRIC" id="fig|197221.4.peg.1873"/>
<dbReference type="eggNOG" id="COG0764">
    <property type="taxonomic scope" value="Bacteria"/>
</dbReference>
<dbReference type="Proteomes" id="UP000000440">
    <property type="component" value="Chromosome"/>
</dbReference>
<dbReference type="GO" id="GO:0005737">
    <property type="term" value="C:cytoplasm"/>
    <property type="evidence" value="ECO:0007669"/>
    <property type="project" value="UniProtKB-SubCell"/>
</dbReference>
<dbReference type="GO" id="GO:0016020">
    <property type="term" value="C:membrane"/>
    <property type="evidence" value="ECO:0007669"/>
    <property type="project" value="GOC"/>
</dbReference>
<dbReference type="GO" id="GO:0019171">
    <property type="term" value="F:(3R)-hydroxyacyl-[acyl-carrier-protein] dehydratase activity"/>
    <property type="evidence" value="ECO:0007669"/>
    <property type="project" value="UniProtKB-EC"/>
</dbReference>
<dbReference type="GO" id="GO:0006633">
    <property type="term" value="P:fatty acid biosynthetic process"/>
    <property type="evidence" value="ECO:0007669"/>
    <property type="project" value="UniProtKB-UniRule"/>
</dbReference>
<dbReference type="GO" id="GO:0009245">
    <property type="term" value="P:lipid A biosynthetic process"/>
    <property type="evidence" value="ECO:0007669"/>
    <property type="project" value="UniProtKB-UniRule"/>
</dbReference>
<dbReference type="CDD" id="cd01288">
    <property type="entry name" value="FabZ"/>
    <property type="match status" value="1"/>
</dbReference>
<dbReference type="FunFam" id="3.10.129.10:FF:000001">
    <property type="entry name" value="3-hydroxyacyl-[acyl-carrier-protein] dehydratase FabZ"/>
    <property type="match status" value="1"/>
</dbReference>
<dbReference type="Gene3D" id="3.10.129.10">
    <property type="entry name" value="Hotdog Thioesterase"/>
    <property type="match status" value="1"/>
</dbReference>
<dbReference type="HAMAP" id="MF_00406">
    <property type="entry name" value="FabZ"/>
    <property type="match status" value="1"/>
</dbReference>
<dbReference type="InterPro" id="IPR013114">
    <property type="entry name" value="FabA_FabZ"/>
</dbReference>
<dbReference type="InterPro" id="IPR010084">
    <property type="entry name" value="FabZ"/>
</dbReference>
<dbReference type="InterPro" id="IPR029069">
    <property type="entry name" value="HotDog_dom_sf"/>
</dbReference>
<dbReference type="NCBIfam" id="TIGR01750">
    <property type="entry name" value="fabZ"/>
    <property type="match status" value="1"/>
</dbReference>
<dbReference type="NCBIfam" id="NF000582">
    <property type="entry name" value="PRK00006.1"/>
    <property type="match status" value="1"/>
</dbReference>
<dbReference type="PANTHER" id="PTHR30272">
    <property type="entry name" value="3-HYDROXYACYL-[ACYL-CARRIER-PROTEIN] DEHYDRATASE"/>
    <property type="match status" value="1"/>
</dbReference>
<dbReference type="PANTHER" id="PTHR30272:SF1">
    <property type="entry name" value="3-HYDROXYACYL-[ACYL-CARRIER-PROTEIN] DEHYDRATASE"/>
    <property type="match status" value="1"/>
</dbReference>
<dbReference type="Pfam" id="PF07977">
    <property type="entry name" value="FabA"/>
    <property type="match status" value="1"/>
</dbReference>
<dbReference type="SUPFAM" id="SSF54637">
    <property type="entry name" value="Thioesterase/thiol ester dehydrase-isomerase"/>
    <property type="match status" value="1"/>
</dbReference>
<evidence type="ECO:0000255" key="1">
    <source>
        <dbReference type="HAMAP-Rule" id="MF_00406"/>
    </source>
</evidence>
<organism>
    <name type="scientific">Thermosynechococcus vestitus (strain NIES-2133 / IAM M-273 / BP-1)</name>
    <dbReference type="NCBI Taxonomy" id="197221"/>
    <lineage>
        <taxon>Bacteria</taxon>
        <taxon>Bacillati</taxon>
        <taxon>Cyanobacteriota</taxon>
        <taxon>Cyanophyceae</taxon>
        <taxon>Acaryochloridales</taxon>
        <taxon>Thermosynechococcaceae</taxon>
        <taxon>Thermosynechococcus</taxon>
    </lineage>
</organism>
<protein>
    <recommendedName>
        <fullName evidence="1">3-hydroxyacyl-[acyl-carrier-protein] dehydratase FabZ</fullName>
        <ecNumber evidence="1">4.2.1.59</ecNumber>
    </recommendedName>
    <alternativeName>
        <fullName evidence="1">(3R)-hydroxymyristoyl-[acyl-carrier-protein] dehydratase</fullName>
        <shortName evidence="1">(3R)-hydroxymyristoyl-ACP dehydrase</shortName>
    </alternativeName>
    <alternativeName>
        <fullName evidence="1">Beta-hydroxyacyl-ACP dehydratase</fullName>
    </alternativeName>
</protein>
<gene>
    <name evidence="1" type="primary">fabZ</name>
    <name type="ordered locus">tlr1791</name>
</gene>
<reference key="1">
    <citation type="journal article" date="2002" name="DNA Res.">
        <title>Complete genome structure of the thermophilic cyanobacterium Thermosynechococcus elongatus BP-1.</title>
        <authorList>
            <person name="Nakamura Y."/>
            <person name="Kaneko T."/>
            <person name="Sato S."/>
            <person name="Ikeuchi M."/>
            <person name="Katoh H."/>
            <person name="Sasamoto S."/>
            <person name="Watanabe A."/>
            <person name="Iriguchi M."/>
            <person name="Kawashima K."/>
            <person name="Kimura T."/>
            <person name="Kishida Y."/>
            <person name="Kiyokawa C."/>
            <person name="Kohara M."/>
            <person name="Matsumoto M."/>
            <person name="Matsuno A."/>
            <person name="Nakazaki N."/>
            <person name="Shimpo S."/>
            <person name="Sugimoto M."/>
            <person name="Takeuchi C."/>
            <person name="Yamada M."/>
            <person name="Tabata S."/>
        </authorList>
    </citation>
    <scope>NUCLEOTIDE SEQUENCE [LARGE SCALE GENOMIC DNA]</scope>
    <source>
        <strain>NIES-2133 / IAM M-273 / BP-1</strain>
    </source>
</reference>
<comment type="function">
    <text evidence="1">Involved in unsaturated fatty acids biosynthesis. Catalyzes the dehydration of short chain beta-hydroxyacyl-ACPs and long chain saturated and unsaturated beta-hydroxyacyl-ACPs.</text>
</comment>
<comment type="catalytic activity">
    <reaction evidence="1">
        <text>a (3R)-hydroxyacyl-[ACP] = a (2E)-enoyl-[ACP] + H2O</text>
        <dbReference type="Rhea" id="RHEA:13097"/>
        <dbReference type="Rhea" id="RHEA-COMP:9925"/>
        <dbReference type="Rhea" id="RHEA-COMP:9945"/>
        <dbReference type="ChEBI" id="CHEBI:15377"/>
        <dbReference type="ChEBI" id="CHEBI:78784"/>
        <dbReference type="ChEBI" id="CHEBI:78827"/>
        <dbReference type="EC" id="4.2.1.59"/>
    </reaction>
</comment>
<comment type="subcellular location">
    <subcellularLocation>
        <location evidence="1">Cytoplasm</location>
    </subcellularLocation>
</comment>
<comment type="similarity">
    <text evidence="1">Belongs to the thioester dehydratase family. FabZ subfamily.</text>
</comment>
<feature type="chain" id="PRO_0000091750" description="3-hydroxyacyl-[acyl-carrier-protein] dehydratase FabZ">
    <location>
        <begin position="1"/>
        <end position="153"/>
    </location>
</feature>
<feature type="active site" evidence="1">
    <location>
        <position position="59"/>
    </location>
</feature>
<accession>Q8DI01</accession>
<name>FABZ_THEVB</name>
<proteinExistence type="inferred from homology"/>